<feature type="chain" id="PRO_0000081397" description="Transcriptional regulatory protein YxdJ">
    <location>
        <begin position="1"/>
        <end position="229"/>
    </location>
</feature>
<feature type="domain" description="Response regulatory" evidence="1">
    <location>
        <begin position="3"/>
        <end position="116"/>
    </location>
</feature>
<feature type="DNA-binding region" description="OmpR/PhoB-type" evidence="2">
    <location>
        <begin position="129"/>
        <end position="227"/>
    </location>
</feature>
<feature type="modified residue" description="4-aspartylphosphate" evidence="1">
    <location>
        <position position="52"/>
    </location>
</feature>
<dbReference type="EMBL" id="D14399">
    <property type="protein sequence ID" value="BAA03300.1"/>
    <property type="molecule type" value="Genomic_DNA"/>
</dbReference>
<dbReference type="EMBL" id="AL009126">
    <property type="protein sequence ID" value="CAB16002.1"/>
    <property type="molecule type" value="Genomic_DNA"/>
</dbReference>
<dbReference type="PIR" id="G70073">
    <property type="entry name" value="G70073"/>
</dbReference>
<dbReference type="RefSeq" id="WP_003243527.1">
    <property type="nucleotide sequence ID" value="NZ_OZ025638.1"/>
</dbReference>
<dbReference type="SMR" id="P42421"/>
<dbReference type="FunCoup" id="P42421">
    <property type="interactions" value="289"/>
</dbReference>
<dbReference type="IntAct" id="P42421">
    <property type="interactions" value="1"/>
</dbReference>
<dbReference type="STRING" id="224308.BSU39660"/>
<dbReference type="PaxDb" id="224308-BSU39660"/>
<dbReference type="EnsemblBacteria" id="CAB16002">
    <property type="protein sequence ID" value="CAB16002"/>
    <property type="gene ID" value="BSU_39660"/>
</dbReference>
<dbReference type="GeneID" id="937599"/>
<dbReference type="KEGG" id="bsu:BSU39660"/>
<dbReference type="PATRIC" id="fig|224308.179.peg.4291"/>
<dbReference type="eggNOG" id="COG0745">
    <property type="taxonomic scope" value="Bacteria"/>
</dbReference>
<dbReference type="InParanoid" id="P42421"/>
<dbReference type="OrthoDB" id="9790442at2"/>
<dbReference type="PhylomeDB" id="P42421"/>
<dbReference type="BioCyc" id="BSUB:BSU39660-MONOMER"/>
<dbReference type="Proteomes" id="UP000001570">
    <property type="component" value="Chromosome"/>
</dbReference>
<dbReference type="GO" id="GO:0005829">
    <property type="term" value="C:cytosol"/>
    <property type="evidence" value="ECO:0000318"/>
    <property type="project" value="GO_Central"/>
</dbReference>
<dbReference type="GO" id="GO:0032993">
    <property type="term" value="C:protein-DNA complex"/>
    <property type="evidence" value="ECO:0000318"/>
    <property type="project" value="GO_Central"/>
</dbReference>
<dbReference type="GO" id="GO:0000156">
    <property type="term" value="F:phosphorelay response regulator activity"/>
    <property type="evidence" value="ECO:0000318"/>
    <property type="project" value="GO_Central"/>
</dbReference>
<dbReference type="GO" id="GO:0000976">
    <property type="term" value="F:transcription cis-regulatory region binding"/>
    <property type="evidence" value="ECO:0000318"/>
    <property type="project" value="GO_Central"/>
</dbReference>
<dbReference type="GO" id="GO:0006355">
    <property type="term" value="P:regulation of DNA-templated transcription"/>
    <property type="evidence" value="ECO:0000318"/>
    <property type="project" value="GO_Central"/>
</dbReference>
<dbReference type="CDD" id="cd18159">
    <property type="entry name" value="REC_OmpR_NsrR-like"/>
    <property type="match status" value="1"/>
</dbReference>
<dbReference type="CDD" id="cd00383">
    <property type="entry name" value="trans_reg_C"/>
    <property type="match status" value="1"/>
</dbReference>
<dbReference type="FunFam" id="3.40.50.2300:FF:000065">
    <property type="entry name" value="DNA-binding response regulator"/>
    <property type="match status" value="1"/>
</dbReference>
<dbReference type="Gene3D" id="3.40.50.2300">
    <property type="match status" value="1"/>
</dbReference>
<dbReference type="Gene3D" id="6.10.250.690">
    <property type="match status" value="1"/>
</dbReference>
<dbReference type="Gene3D" id="1.10.10.10">
    <property type="entry name" value="Winged helix-like DNA-binding domain superfamily/Winged helix DNA-binding domain"/>
    <property type="match status" value="1"/>
</dbReference>
<dbReference type="InterPro" id="IPR011006">
    <property type="entry name" value="CheY-like_superfamily"/>
</dbReference>
<dbReference type="InterPro" id="IPR001867">
    <property type="entry name" value="OmpR/PhoB-type_DNA-bd"/>
</dbReference>
<dbReference type="InterPro" id="IPR016032">
    <property type="entry name" value="Sig_transdc_resp-reg_C-effctor"/>
</dbReference>
<dbReference type="InterPro" id="IPR001789">
    <property type="entry name" value="Sig_transdc_resp-reg_receiver"/>
</dbReference>
<dbReference type="InterPro" id="IPR039420">
    <property type="entry name" value="WalR-like"/>
</dbReference>
<dbReference type="InterPro" id="IPR036388">
    <property type="entry name" value="WH-like_DNA-bd_sf"/>
</dbReference>
<dbReference type="PANTHER" id="PTHR48111">
    <property type="entry name" value="REGULATOR OF RPOS"/>
    <property type="match status" value="1"/>
</dbReference>
<dbReference type="PANTHER" id="PTHR48111:SF31">
    <property type="entry name" value="TRANSCRIPTIONAL REGULATORY PROTEIN YXDJ"/>
    <property type="match status" value="1"/>
</dbReference>
<dbReference type="Pfam" id="PF00072">
    <property type="entry name" value="Response_reg"/>
    <property type="match status" value="1"/>
</dbReference>
<dbReference type="Pfam" id="PF00486">
    <property type="entry name" value="Trans_reg_C"/>
    <property type="match status" value="1"/>
</dbReference>
<dbReference type="SMART" id="SM00448">
    <property type="entry name" value="REC"/>
    <property type="match status" value="1"/>
</dbReference>
<dbReference type="SMART" id="SM00862">
    <property type="entry name" value="Trans_reg_C"/>
    <property type="match status" value="1"/>
</dbReference>
<dbReference type="SUPFAM" id="SSF46894">
    <property type="entry name" value="C-terminal effector domain of the bipartite response regulators"/>
    <property type="match status" value="1"/>
</dbReference>
<dbReference type="SUPFAM" id="SSF52172">
    <property type="entry name" value="CheY-like"/>
    <property type="match status" value="1"/>
</dbReference>
<dbReference type="PROSITE" id="PS51755">
    <property type="entry name" value="OMPR_PHOB"/>
    <property type="match status" value="1"/>
</dbReference>
<dbReference type="PROSITE" id="PS50110">
    <property type="entry name" value="RESPONSE_REGULATORY"/>
    <property type="match status" value="1"/>
</dbReference>
<sequence length="229" mass="26600">MNKIMIVEDSEDIRGLLQNYLEKYGYQTVVAADFTAVLDVFLREKPDVVLLDINLPAYDGYYWCRQIRQHSTSPIIFISARSGEMDQVMAIENGGDDYIEKPFSYDIVLAKIKSQIRRAYGEYAAKQGEKVVEYAGVQLFVERFELRFQDEKSELSKKESKLLEVLLERGEKVTSRDRLMEKTWDTDIFIDDNTLNVYITRLRKKLRELNAPVSIEAVRGEGYQLRAQS</sequence>
<reference key="1">
    <citation type="journal article" date="1994" name="Microbiology">
        <title>Cloning and nucleotide sequencing of a 15 kb region of the Bacillus subtilis genome containing the iol operon.</title>
        <authorList>
            <person name="Yoshida K."/>
            <person name="Sano H."/>
            <person name="Miwa Y."/>
            <person name="Ogasawara N."/>
            <person name="Fujita Y."/>
        </authorList>
    </citation>
    <scope>NUCLEOTIDE SEQUENCE [GENOMIC DNA]</scope>
    <source>
        <strain>168 / BGSC1A1</strain>
    </source>
</reference>
<reference key="2">
    <citation type="journal article" date="1997" name="Nature">
        <title>The complete genome sequence of the Gram-positive bacterium Bacillus subtilis.</title>
        <authorList>
            <person name="Kunst F."/>
            <person name="Ogasawara N."/>
            <person name="Moszer I."/>
            <person name="Albertini A.M."/>
            <person name="Alloni G."/>
            <person name="Azevedo V."/>
            <person name="Bertero M.G."/>
            <person name="Bessieres P."/>
            <person name="Bolotin A."/>
            <person name="Borchert S."/>
            <person name="Borriss R."/>
            <person name="Boursier L."/>
            <person name="Brans A."/>
            <person name="Braun M."/>
            <person name="Brignell S.C."/>
            <person name="Bron S."/>
            <person name="Brouillet S."/>
            <person name="Bruschi C.V."/>
            <person name="Caldwell B."/>
            <person name="Capuano V."/>
            <person name="Carter N.M."/>
            <person name="Choi S.-K."/>
            <person name="Codani J.-J."/>
            <person name="Connerton I.F."/>
            <person name="Cummings N.J."/>
            <person name="Daniel R.A."/>
            <person name="Denizot F."/>
            <person name="Devine K.M."/>
            <person name="Duesterhoeft A."/>
            <person name="Ehrlich S.D."/>
            <person name="Emmerson P.T."/>
            <person name="Entian K.-D."/>
            <person name="Errington J."/>
            <person name="Fabret C."/>
            <person name="Ferrari E."/>
            <person name="Foulger D."/>
            <person name="Fritz C."/>
            <person name="Fujita M."/>
            <person name="Fujita Y."/>
            <person name="Fuma S."/>
            <person name="Galizzi A."/>
            <person name="Galleron N."/>
            <person name="Ghim S.-Y."/>
            <person name="Glaser P."/>
            <person name="Goffeau A."/>
            <person name="Golightly E.J."/>
            <person name="Grandi G."/>
            <person name="Guiseppi G."/>
            <person name="Guy B.J."/>
            <person name="Haga K."/>
            <person name="Haiech J."/>
            <person name="Harwood C.R."/>
            <person name="Henaut A."/>
            <person name="Hilbert H."/>
            <person name="Holsappel S."/>
            <person name="Hosono S."/>
            <person name="Hullo M.-F."/>
            <person name="Itaya M."/>
            <person name="Jones L.-M."/>
            <person name="Joris B."/>
            <person name="Karamata D."/>
            <person name="Kasahara Y."/>
            <person name="Klaerr-Blanchard M."/>
            <person name="Klein C."/>
            <person name="Kobayashi Y."/>
            <person name="Koetter P."/>
            <person name="Koningstein G."/>
            <person name="Krogh S."/>
            <person name="Kumano M."/>
            <person name="Kurita K."/>
            <person name="Lapidus A."/>
            <person name="Lardinois S."/>
            <person name="Lauber J."/>
            <person name="Lazarevic V."/>
            <person name="Lee S.-M."/>
            <person name="Levine A."/>
            <person name="Liu H."/>
            <person name="Masuda S."/>
            <person name="Mauel C."/>
            <person name="Medigue C."/>
            <person name="Medina N."/>
            <person name="Mellado R.P."/>
            <person name="Mizuno M."/>
            <person name="Moestl D."/>
            <person name="Nakai S."/>
            <person name="Noback M."/>
            <person name="Noone D."/>
            <person name="O'Reilly M."/>
            <person name="Ogawa K."/>
            <person name="Ogiwara A."/>
            <person name="Oudega B."/>
            <person name="Park S.-H."/>
            <person name="Parro V."/>
            <person name="Pohl T.M."/>
            <person name="Portetelle D."/>
            <person name="Porwollik S."/>
            <person name="Prescott A.M."/>
            <person name="Presecan E."/>
            <person name="Pujic P."/>
            <person name="Purnelle B."/>
            <person name="Rapoport G."/>
            <person name="Rey M."/>
            <person name="Reynolds S."/>
            <person name="Rieger M."/>
            <person name="Rivolta C."/>
            <person name="Rocha E."/>
            <person name="Roche B."/>
            <person name="Rose M."/>
            <person name="Sadaie Y."/>
            <person name="Sato T."/>
            <person name="Scanlan E."/>
            <person name="Schleich S."/>
            <person name="Schroeter R."/>
            <person name="Scoffone F."/>
            <person name="Sekiguchi J."/>
            <person name="Sekowska A."/>
            <person name="Seror S.J."/>
            <person name="Serror P."/>
            <person name="Shin B.-S."/>
            <person name="Soldo B."/>
            <person name="Sorokin A."/>
            <person name="Tacconi E."/>
            <person name="Takagi T."/>
            <person name="Takahashi H."/>
            <person name="Takemaru K."/>
            <person name="Takeuchi M."/>
            <person name="Tamakoshi A."/>
            <person name="Tanaka T."/>
            <person name="Terpstra P."/>
            <person name="Tognoni A."/>
            <person name="Tosato V."/>
            <person name="Uchiyama S."/>
            <person name="Vandenbol M."/>
            <person name="Vannier F."/>
            <person name="Vassarotti A."/>
            <person name="Viari A."/>
            <person name="Wambutt R."/>
            <person name="Wedler E."/>
            <person name="Wedler H."/>
            <person name="Weitzenegger T."/>
            <person name="Winters P."/>
            <person name="Wipat A."/>
            <person name="Yamamoto H."/>
            <person name="Yamane K."/>
            <person name="Yasumoto K."/>
            <person name="Yata K."/>
            <person name="Yoshida K."/>
            <person name="Yoshikawa H.-F."/>
            <person name="Zumstein E."/>
            <person name="Yoshikawa H."/>
            <person name="Danchin A."/>
        </authorList>
    </citation>
    <scope>NUCLEOTIDE SEQUENCE [LARGE SCALE GENOMIC DNA]</scope>
    <source>
        <strain>168</strain>
    </source>
</reference>
<reference key="3">
    <citation type="journal article" date="2001" name="J. Bacteriol.">
        <title>Comprehensive DNA microarray analysis of Bacillus subtilis two-component regulatory systems.</title>
        <authorList>
            <person name="Kobayashi K."/>
            <person name="Ogura M."/>
            <person name="Yamaguchi H."/>
            <person name="Yoshida K."/>
            <person name="Ogasawara N."/>
            <person name="Tanaka T."/>
            <person name="Fujita Y."/>
        </authorList>
    </citation>
    <scope>FUNCTION</scope>
</reference>
<reference key="4">
    <citation type="journal article" date="2004" name="Microbiology">
        <title>Characterization of the Bacillus subtilis YxdJ response regulator as the inducer of expression for the cognate ABC transporter YxdLM.</title>
        <authorList>
            <person name="Joseph P."/>
            <person name="Guiseppi A."/>
            <person name="Sorokin A."/>
            <person name="Denizot F."/>
        </authorList>
    </citation>
    <scope>FUNCTION</scope>
    <source>
        <strain>168</strain>
    </source>
</reference>
<reference key="5">
    <citation type="journal article" date="2005" name="Microbiology">
        <title>Cationic antimicrobial peptides elicit a complex stress response in Bacillus subtilis that involves ECF-type sigma factors and two-component signal transduction systems.</title>
        <authorList>
            <person name="Pietiaeinen M."/>
            <person name="Gardemeister M."/>
            <person name="Mecklin M."/>
            <person name="Leskelae S."/>
            <person name="Sarvas M."/>
            <person name="Kontinen V.P."/>
        </authorList>
    </citation>
    <scope>FUNCTION</scope>
    <source>
        <strain>168</strain>
    </source>
</reference>
<comment type="function">
    <text evidence="3 4 5">Probable member of the two-component regulatory system YxdK/YxdJ. Positively regulates the expression of the yxdLMyxeA operon by direct interaction with its promoter region. Could also indirectly regulate the expression of the dlt operon.</text>
</comment>
<comment type="subcellular location">
    <subcellularLocation>
        <location evidence="6">Cytoplasm</location>
    </subcellularLocation>
</comment>
<comment type="PTM">
    <text evidence="6">Phosphorylated by YxdK.</text>
</comment>
<protein>
    <recommendedName>
        <fullName>Transcriptional regulatory protein YxdJ</fullName>
    </recommendedName>
</protein>
<gene>
    <name type="primary">yxdJ</name>
    <name type="ordered locus">BSU39660</name>
    <name type="ORF">B65D</name>
</gene>
<accession>P42421</accession>
<evidence type="ECO:0000255" key="1">
    <source>
        <dbReference type="PROSITE-ProRule" id="PRU00169"/>
    </source>
</evidence>
<evidence type="ECO:0000255" key="2">
    <source>
        <dbReference type="PROSITE-ProRule" id="PRU01091"/>
    </source>
</evidence>
<evidence type="ECO:0000269" key="3">
    <source>
    </source>
</evidence>
<evidence type="ECO:0000269" key="4">
    <source>
    </source>
</evidence>
<evidence type="ECO:0000269" key="5">
    <source>
    </source>
</evidence>
<evidence type="ECO:0000305" key="6"/>
<name>YXDJ_BACSU</name>
<keyword id="KW-0010">Activator</keyword>
<keyword id="KW-0963">Cytoplasm</keyword>
<keyword id="KW-0238">DNA-binding</keyword>
<keyword id="KW-0597">Phosphoprotein</keyword>
<keyword id="KW-1185">Reference proteome</keyword>
<keyword id="KW-0804">Transcription</keyword>
<keyword id="KW-0805">Transcription regulation</keyword>
<keyword id="KW-0902">Two-component regulatory system</keyword>
<proteinExistence type="inferred from homology"/>
<organism>
    <name type="scientific">Bacillus subtilis (strain 168)</name>
    <dbReference type="NCBI Taxonomy" id="224308"/>
    <lineage>
        <taxon>Bacteria</taxon>
        <taxon>Bacillati</taxon>
        <taxon>Bacillota</taxon>
        <taxon>Bacilli</taxon>
        <taxon>Bacillales</taxon>
        <taxon>Bacillaceae</taxon>
        <taxon>Bacillus</taxon>
    </lineage>
</organism>